<name>THIG_XANOM</name>
<feature type="chain" id="PRO_0000236378" description="Thiazole synthase">
    <location>
        <begin position="1"/>
        <end position="264"/>
    </location>
</feature>
<feature type="active site" description="Schiff-base intermediate with DXP" evidence="1">
    <location>
        <position position="106"/>
    </location>
</feature>
<feature type="binding site" evidence="1">
    <location>
        <position position="167"/>
    </location>
    <ligand>
        <name>1-deoxy-D-xylulose 5-phosphate</name>
        <dbReference type="ChEBI" id="CHEBI:57792"/>
    </ligand>
</feature>
<feature type="binding site" evidence="1">
    <location>
        <begin position="193"/>
        <end position="194"/>
    </location>
    <ligand>
        <name>1-deoxy-D-xylulose 5-phosphate</name>
        <dbReference type="ChEBI" id="CHEBI:57792"/>
    </ligand>
</feature>
<feature type="binding site" evidence="1">
    <location>
        <begin position="215"/>
        <end position="216"/>
    </location>
    <ligand>
        <name>1-deoxy-D-xylulose 5-phosphate</name>
        <dbReference type="ChEBI" id="CHEBI:57792"/>
    </ligand>
</feature>
<dbReference type="EC" id="2.8.1.10" evidence="1"/>
<dbReference type="EMBL" id="AP008229">
    <property type="protein sequence ID" value="BAE69932.1"/>
    <property type="molecule type" value="Genomic_DNA"/>
</dbReference>
<dbReference type="RefSeq" id="WP_011409125.1">
    <property type="nucleotide sequence ID" value="NC_007705.1"/>
</dbReference>
<dbReference type="SMR" id="Q2P0J5"/>
<dbReference type="KEGG" id="xom:XOO3177"/>
<dbReference type="HOGENOM" id="CLU_062233_1_0_6"/>
<dbReference type="UniPathway" id="UPA00060"/>
<dbReference type="GO" id="GO:0005737">
    <property type="term" value="C:cytoplasm"/>
    <property type="evidence" value="ECO:0007669"/>
    <property type="project" value="UniProtKB-SubCell"/>
</dbReference>
<dbReference type="GO" id="GO:1990107">
    <property type="term" value="F:thiazole synthase activity"/>
    <property type="evidence" value="ECO:0007669"/>
    <property type="project" value="UniProtKB-EC"/>
</dbReference>
<dbReference type="GO" id="GO:0009229">
    <property type="term" value="P:thiamine diphosphate biosynthetic process"/>
    <property type="evidence" value="ECO:0007669"/>
    <property type="project" value="UniProtKB-UniRule"/>
</dbReference>
<dbReference type="CDD" id="cd04728">
    <property type="entry name" value="ThiG"/>
    <property type="match status" value="1"/>
</dbReference>
<dbReference type="FunFam" id="3.20.20.70:FF:000049">
    <property type="entry name" value="Thiazole synthase"/>
    <property type="match status" value="1"/>
</dbReference>
<dbReference type="Gene3D" id="3.20.20.70">
    <property type="entry name" value="Aldolase class I"/>
    <property type="match status" value="1"/>
</dbReference>
<dbReference type="HAMAP" id="MF_00443">
    <property type="entry name" value="ThiG"/>
    <property type="match status" value="1"/>
</dbReference>
<dbReference type="InterPro" id="IPR013785">
    <property type="entry name" value="Aldolase_TIM"/>
</dbReference>
<dbReference type="InterPro" id="IPR033983">
    <property type="entry name" value="Thiazole_synthase_ThiG"/>
</dbReference>
<dbReference type="InterPro" id="IPR008867">
    <property type="entry name" value="ThiG"/>
</dbReference>
<dbReference type="PANTHER" id="PTHR34266">
    <property type="entry name" value="THIAZOLE SYNTHASE"/>
    <property type="match status" value="1"/>
</dbReference>
<dbReference type="PANTHER" id="PTHR34266:SF2">
    <property type="entry name" value="THIAZOLE SYNTHASE"/>
    <property type="match status" value="1"/>
</dbReference>
<dbReference type="Pfam" id="PF05690">
    <property type="entry name" value="ThiG"/>
    <property type="match status" value="1"/>
</dbReference>
<dbReference type="SUPFAM" id="SSF110399">
    <property type="entry name" value="ThiG-like"/>
    <property type="match status" value="1"/>
</dbReference>
<organism>
    <name type="scientific">Xanthomonas oryzae pv. oryzae (strain MAFF 311018)</name>
    <dbReference type="NCBI Taxonomy" id="342109"/>
    <lineage>
        <taxon>Bacteria</taxon>
        <taxon>Pseudomonadati</taxon>
        <taxon>Pseudomonadota</taxon>
        <taxon>Gammaproteobacteria</taxon>
        <taxon>Lysobacterales</taxon>
        <taxon>Lysobacteraceae</taxon>
        <taxon>Xanthomonas</taxon>
    </lineage>
</organism>
<evidence type="ECO:0000255" key="1">
    <source>
        <dbReference type="HAMAP-Rule" id="MF_00443"/>
    </source>
</evidence>
<comment type="function">
    <text evidence="1">Catalyzes the rearrangement of 1-deoxy-D-xylulose 5-phosphate (DXP) to produce the thiazole phosphate moiety of thiamine. Sulfur is provided by the thiocarboxylate moiety of the carrier protein ThiS. In vitro, sulfur can be provided by H(2)S.</text>
</comment>
<comment type="catalytic activity">
    <reaction evidence="1">
        <text>[ThiS sulfur-carrier protein]-C-terminal-Gly-aminoethanethioate + 2-iminoacetate + 1-deoxy-D-xylulose 5-phosphate = [ThiS sulfur-carrier protein]-C-terminal Gly-Gly + 2-[(2R,5Z)-2-carboxy-4-methylthiazol-5(2H)-ylidene]ethyl phosphate + 2 H2O + H(+)</text>
        <dbReference type="Rhea" id="RHEA:26297"/>
        <dbReference type="Rhea" id="RHEA-COMP:12909"/>
        <dbReference type="Rhea" id="RHEA-COMP:19908"/>
        <dbReference type="ChEBI" id="CHEBI:15377"/>
        <dbReference type="ChEBI" id="CHEBI:15378"/>
        <dbReference type="ChEBI" id="CHEBI:57792"/>
        <dbReference type="ChEBI" id="CHEBI:62899"/>
        <dbReference type="ChEBI" id="CHEBI:77846"/>
        <dbReference type="ChEBI" id="CHEBI:90778"/>
        <dbReference type="ChEBI" id="CHEBI:232372"/>
        <dbReference type="EC" id="2.8.1.10"/>
    </reaction>
</comment>
<comment type="pathway">
    <text evidence="1">Cofactor biosynthesis; thiamine diphosphate biosynthesis.</text>
</comment>
<comment type="subunit">
    <text evidence="1">Homotetramer. Forms heterodimers with either ThiH or ThiS.</text>
</comment>
<comment type="subcellular location">
    <subcellularLocation>
        <location evidence="1">Cytoplasm</location>
    </subcellularLocation>
</comment>
<comment type="similarity">
    <text evidence="1">Belongs to the ThiG family.</text>
</comment>
<protein>
    <recommendedName>
        <fullName evidence="1">Thiazole synthase</fullName>
        <ecNumber evidence="1">2.8.1.10</ecNumber>
    </recommendedName>
</protein>
<proteinExistence type="inferred from homology"/>
<accession>Q2P0J5</accession>
<gene>
    <name evidence="1" type="primary">thiG</name>
    <name type="ordered locus">XOO3177</name>
</gene>
<reference key="1">
    <citation type="journal article" date="2005" name="Jpn. Agric. Res. Q.">
        <title>Genome sequence of Xanthomonas oryzae pv. oryzae suggests contribution of large numbers of effector genes and insertion sequences to its race diversity.</title>
        <authorList>
            <person name="Ochiai H."/>
            <person name="Inoue Y."/>
            <person name="Takeya M."/>
            <person name="Sasaki A."/>
            <person name="Kaku H."/>
        </authorList>
    </citation>
    <scope>NUCLEOTIDE SEQUENCE [LARGE SCALE GENOMIC DNA]</scope>
    <source>
        <strain>MAFF 311018</strain>
    </source>
</reference>
<keyword id="KW-0963">Cytoplasm</keyword>
<keyword id="KW-0704">Schiff base</keyword>
<keyword id="KW-0784">Thiamine biosynthesis</keyword>
<keyword id="KW-0808">Transferase</keyword>
<sequence>MTTPSPSDALLIAGKRYRSRLLTGTGKFKDLDETRLATEAAAAEIVTVAIRRVNIGQDPNAPSLLDVLPPDRYTLLPNTAGCYSAEDAVRTCRLARELLDGHNLTKLEVLGDERTLYPDVVQTLKAAEQLVADGFEVMVYTSDDPILAKRLEEIGCVAVMPLAAPIGSGLGIQNKYNLLEIIENAKVPIIVDAGVGTASDAAIAMELGCDGVLMNTAIAGARDPILMASAMRKAIEAGREAFLAGRIPRKRYASASSPVDGVIG</sequence>